<accession>E2QTD3</accession>
<dbReference type="SMR" id="E2QTD3"/>
<dbReference type="FunCoup" id="E2QTD3">
    <property type="interactions" value="9"/>
</dbReference>
<dbReference type="STRING" id="9615.ENSCAFP00000020370"/>
<dbReference type="PaxDb" id="9612-ENSCAFP00000020370"/>
<dbReference type="eggNOG" id="KOG2039">
    <property type="taxonomic scope" value="Eukaryota"/>
</dbReference>
<dbReference type="InParanoid" id="E2QTD3"/>
<dbReference type="OrthoDB" id="10052065at2759"/>
<dbReference type="Proteomes" id="UP000002254">
    <property type="component" value="Unplaced"/>
</dbReference>
<dbReference type="Proteomes" id="UP000694429">
    <property type="component" value="Unplaced"/>
</dbReference>
<dbReference type="Proteomes" id="UP000694542">
    <property type="component" value="Unplaced"/>
</dbReference>
<dbReference type="Proteomes" id="UP000805418">
    <property type="component" value="Unplaced"/>
</dbReference>
<dbReference type="GO" id="GO:0033391">
    <property type="term" value="C:chromatoid body"/>
    <property type="evidence" value="ECO:0000250"/>
    <property type="project" value="UniProtKB"/>
</dbReference>
<dbReference type="GO" id="GO:0071546">
    <property type="term" value="C:pi-body"/>
    <property type="evidence" value="ECO:0000250"/>
    <property type="project" value="UniProtKB"/>
</dbReference>
<dbReference type="GO" id="GO:0030719">
    <property type="term" value="P:P granule organization"/>
    <property type="evidence" value="ECO:0000250"/>
    <property type="project" value="UniProtKB"/>
</dbReference>
<dbReference type="GO" id="GO:0007286">
    <property type="term" value="P:spermatid development"/>
    <property type="evidence" value="ECO:0000250"/>
    <property type="project" value="UniProtKB"/>
</dbReference>
<dbReference type="GO" id="GO:0141196">
    <property type="term" value="P:transposable element silencing by piRNA-mediated DNA methylation"/>
    <property type="evidence" value="ECO:0000250"/>
    <property type="project" value="UniProtKB"/>
</dbReference>
<dbReference type="CDD" id="cd09975">
    <property type="entry name" value="LOTUS_2_TDRD5"/>
    <property type="match status" value="1"/>
</dbReference>
<dbReference type="CDD" id="cd09976">
    <property type="entry name" value="LOTUS_3_TDRD5"/>
    <property type="match status" value="1"/>
</dbReference>
<dbReference type="CDD" id="cd20419">
    <property type="entry name" value="Tudor_TDRD5"/>
    <property type="match status" value="1"/>
</dbReference>
<dbReference type="FunFam" id="2.30.30.140:FF:000051">
    <property type="entry name" value="Tudor domain-containing protein 5"/>
    <property type="match status" value="1"/>
</dbReference>
<dbReference type="FunFam" id="3.30.420.610:FF:000005">
    <property type="entry name" value="Tudor domain-containing protein 5"/>
    <property type="match status" value="1"/>
</dbReference>
<dbReference type="FunFam" id="3.30.420.610:FF:000007">
    <property type="entry name" value="Tudor domain-containing protein 5"/>
    <property type="match status" value="1"/>
</dbReference>
<dbReference type="FunFam" id="3.30.420.610:FF:000011">
    <property type="entry name" value="tudor domain-containing protein 5 isoform X3"/>
    <property type="match status" value="1"/>
</dbReference>
<dbReference type="Gene3D" id="2.30.30.140">
    <property type="match status" value="1"/>
</dbReference>
<dbReference type="Gene3D" id="2.40.50.90">
    <property type="match status" value="1"/>
</dbReference>
<dbReference type="Gene3D" id="3.30.420.610">
    <property type="entry name" value="LOTUS domain-like"/>
    <property type="match status" value="3"/>
</dbReference>
<dbReference type="InterPro" id="IPR041966">
    <property type="entry name" value="LOTUS-like"/>
</dbReference>
<dbReference type="InterPro" id="IPR025605">
    <property type="entry name" value="OST-HTH/LOTUS_dom"/>
</dbReference>
<dbReference type="InterPro" id="IPR035437">
    <property type="entry name" value="SNase_OB-fold_sf"/>
</dbReference>
<dbReference type="InterPro" id="IPR037982">
    <property type="entry name" value="TDRD5_LOTUS_2"/>
</dbReference>
<dbReference type="InterPro" id="IPR002999">
    <property type="entry name" value="Tudor"/>
</dbReference>
<dbReference type="InterPro" id="IPR050621">
    <property type="entry name" value="Tudor_domain_containing"/>
</dbReference>
<dbReference type="PANTHER" id="PTHR22948">
    <property type="entry name" value="TUDOR DOMAIN CONTAINING PROTEIN"/>
    <property type="match status" value="1"/>
</dbReference>
<dbReference type="PANTHER" id="PTHR22948:SF19">
    <property type="entry name" value="TUDOR DOMAIN-CONTAINING PROTEIN 5"/>
    <property type="match status" value="1"/>
</dbReference>
<dbReference type="Pfam" id="PF12872">
    <property type="entry name" value="OST-HTH"/>
    <property type="match status" value="3"/>
</dbReference>
<dbReference type="Pfam" id="PF00567">
    <property type="entry name" value="TUDOR"/>
    <property type="match status" value="1"/>
</dbReference>
<dbReference type="SMART" id="SM00333">
    <property type="entry name" value="TUDOR"/>
    <property type="match status" value="1"/>
</dbReference>
<dbReference type="SUPFAM" id="SSF63748">
    <property type="entry name" value="Tudor/PWWP/MBT"/>
    <property type="match status" value="1"/>
</dbReference>
<dbReference type="PROSITE" id="PS51644">
    <property type="entry name" value="HTH_OST"/>
    <property type="match status" value="3"/>
</dbReference>
<dbReference type="PROSITE" id="PS50304">
    <property type="entry name" value="TUDOR"/>
    <property type="match status" value="1"/>
</dbReference>
<reference key="1">
    <citation type="journal article" date="2005" name="Nature">
        <title>Genome sequence, comparative analysis and haplotype structure of the domestic dog.</title>
        <authorList>
            <person name="Lindblad-Toh K."/>
            <person name="Wade C.M."/>
            <person name="Mikkelsen T.S."/>
            <person name="Karlsson E.K."/>
            <person name="Jaffe D.B."/>
            <person name="Kamal M."/>
            <person name="Clamp M."/>
            <person name="Chang J.L."/>
            <person name="Kulbokas E.J. III"/>
            <person name="Zody M.C."/>
            <person name="Mauceli E."/>
            <person name="Xie X."/>
            <person name="Breen M."/>
            <person name="Wayne R.K."/>
            <person name="Ostrander E.A."/>
            <person name="Ponting C.P."/>
            <person name="Galibert F."/>
            <person name="Smith D.R."/>
            <person name="deJong P.J."/>
            <person name="Kirkness E.F."/>
            <person name="Alvarez P."/>
            <person name="Biagi T."/>
            <person name="Brockman W."/>
            <person name="Butler J."/>
            <person name="Chin C.-W."/>
            <person name="Cook A."/>
            <person name="Cuff J."/>
            <person name="Daly M.J."/>
            <person name="DeCaprio D."/>
            <person name="Gnerre S."/>
            <person name="Grabherr M."/>
            <person name="Kellis M."/>
            <person name="Kleber M."/>
            <person name="Bardeleben C."/>
            <person name="Goodstadt L."/>
            <person name="Heger A."/>
            <person name="Hitte C."/>
            <person name="Kim L."/>
            <person name="Koepfli K.-P."/>
            <person name="Parker H.G."/>
            <person name="Pollinger J.P."/>
            <person name="Searle S.M.J."/>
            <person name="Sutter N.B."/>
            <person name="Thomas R."/>
            <person name="Webber C."/>
            <person name="Baldwin J."/>
            <person name="Abebe A."/>
            <person name="Abouelleil A."/>
            <person name="Aftuck L."/>
            <person name="Ait-Zahra M."/>
            <person name="Aldredge T."/>
            <person name="Allen N."/>
            <person name="An P."/>
            <person name="Anderson S."/>
            <person name="Antoine C."/>
            <person name="Arachchi H."/>
            <person name="Aslam A."/>
            <person name="Ayotte L."/>
            <person name="Bachantsang P."/>
            <person name="Barry A."/>
            <person name="Bayul T."/>
            <person name="Benamara M."/>
            <person name="Berlin A."/>
            <person name="Bessette D."/>
            <person name="Blitshteyn B."/>
            <person name="Bloom T."/>
            <person name="Blye J."/>
            <person name="Boguslavskiy L."/>
            <person name="Bonnet C."/>
            <person name="Boukhgalter B."/>
            <person name="Brown A."/>
            <person name="Cahill P."/>
            <person name="Calixte N."/>
            <person name="Camarata J."/>
            <person name="Cheshatsang Y."/>
            <person name="Chu J."/>
            <person name="Citroen M."/>
            <person name="Collymore A."/>
            <person name="Cooke P."/>
            <person name="Dawoe T."/>
            <person name="Daza R."/>
            <person name="Decktor K."/>
            <person name="DeGray S."/>
            <person name="Dhargay N."/>
            <person name="Dooley K."/>
            <person name="Dooley K."/>
            <person name="Dorje P."/>
            <person name="Dorjee K."/>
            <person name="Dorris L."/>
            <person name="Duffey N."/>
            <person name="Dupes A."/>
            <person name="Egbiremolen O."/>
            <person name="Elong R."/>
            <person name="Falk J."/>
            <person name="Farina A."/>
            <person name="Faro S."/>
            <person name="Ferguson D."/>
            <person name="Ferreira P."/>
            <person name="Fisher S."/>
            <person name="FitzGerald M."/>
            <person name="Foley K."/>
            <person name="Foley C."/>
            <person name="Franke A."/>
            <person name="Friedrich D."/>
            <person name="Gage D."/>
            <person name="Garber M."/>
            <person name="Gearin G."/>
            <person name="Giannoukos G."/>
            <person name="Goode T."/>
            <person name="Goyette A."/>
            <person name="Graham J."/>
            <person name="Grandbois E."/>
            <person name="Gyaltsen K."/>
            <person name="Hafez N."/>
            <person name="Hagopian D."/>
            <person name="Hagos B."/>
            <person name="Hall J."/>
            <person name="Healy C."/>
            <person name="Hegarty R."/>
            <person name="Honan T."/>
            <person name="Horn A."/>
            <person name="Houde N."/>
            <person name="Hughes L."/>
            <person name="Hunnicutt L."/>
            <person name="Husby M."/>
            <person name="Jester B."/>
            <person name="Jones C."/>
            <person name="Kamat A."/>
            <person name="Kanga B."/>
            <person name="Kells C."/>
            <person name="Khazanovich D."/>
            <person name="Kieu A.C."/>
            <person name="Kisner P."/>
            <person name="Kumar M."/>
            <person name="Lance K."/>
            <person name="Landers T."/>
            <person name="Lara M."/>
            <person name="Lee W."/>
            <person name="Leger J.-P."/>
            <person name="Lennon N."/>
            <person name="Leuper L."/>
            <person name="LeVine S."/>
            <person name="Liu J."/>
            <person name="Liu X."/>
            <person name="Lokyitsang Y."/>
            <person name="Lokyitsang T."/>
            <person name="Lui A."/>
            <person name="Macdonald J."/>
            <person name="Major J."/>
            <person name="Marabella R."/>
            <person name="Maru K."/>
            <person name="Matthews C."/>
            <person name="McDonough S."/>
            <person name="Mehta T."/>
            <person name="Meldrim J."/>
            <person name="Melnikov A."/>
            <person name="Meneus L."/>
            <person name="Mihalev A."/>
            <person name="Mihova T."/>
            <person name="Miller K."/>
            <person name="Mittelman R."/>
            <person name="Mlenga V."/>
            <person name="Mulrain L."/>
            <person name="Munson G."/>
            <person name="Navidi A."/>
            <person name="Naylor J."/>
            <person name="Nguyen T."/>
            <person name="Nguyen N."/>
            <person name="Nguyen C."/>
            <person name="Nguyen T."/>
            <person name="Nicol R."/>
            <person name="Norbu N."/>
            <person name="Norbu C."/>
            <person name="Novod N."/>
            <person name="Nyima T."/>
            <person name="Olandt P."/>
            <person name="O'Neill B."/>
            <person name="O'Neill K."/>
            <person name="Osman S."/>
            <person name="Oyono L."/>
            <person name="Patti C."/>
            <person name="Perrin D."/>
            <person name="Phunkhang P."/>
            <person name="Pierre F."/>
            <person name="Priest M."/>
            <person name="Rachupka A."/>
            <person name="Raghuraman S."/>
            <person name="Rameau R."/>
            <person name="Ray V."/>
            <person name="Raymond C."/>
            <person name="Rege F."/>
            <person name="Rise C."/>
            <person name="Rogers J."/>
            <person name="Rogov P."/>
            <person name="Sahalie J."/>
            <person name="Settipalli S."/>
            <person name="Sharpe T."/>
            <person name="Shea T."/>
            <person name="Sheehan M."/>
            <person name="Sherpa N."/>
            <person name="Shi J."/>
            <person name="Shih D."/>
            <person name="Sloan J."/>
            <person name="Smith C."/>
            <person name="Sparrow T."/>
            <person name="Stalker J."/>
            <person name="Stange-Thomann N."/>
            <person name="Stavropoulos S."/>
            <person name="Stone C."/>
            <person name="Stone S."/>
            <person name="Sykes S."/>
            <person name="Tchuinga P."/>
            <person name="Tenzing P."/>
            <person name="Tesfaye S."/>
            <person name="Thoulutsang D."/>
            <person name="Thoulutsang Y."/>
            <person name="Topham K."/>
            <person name="Topping I."/>
            <person name="Tsamla T."/>
            <person name="Vassiliev H."/>
            <person name="Venkataraman V."/>
            <person name="Vo A."/>
            <person name="Wangchuk T."/>
            <person name="Wangdi T."/>
            <person name="Weiand M."/>
            <person name="Wilkinson J."/>
            <person name="Wilson A."/>
            <person name="Yadav S."/>
            <person name="Yang S."/>
            <person name="Yang X."/>
            <person name="Young G."/>
            <person name="Yu Q."/>
            <person name="Zainoun J."/>
            <person name="Zembek L."/>
            <person name="Zimmer A."/>
            <person name="Lander E.S."/>
        </authorList>
    </citation>
    <scope>NUCLEOTIDE SEQUENCE [LARGE SCALE GENOMIC DNA]</scope>
    <source>
        <strain>Boxer</strain>
    </source>
</reference>
<gene>
    <name type="primary">TDRD5</name>
</gene>
<feature type="chain" id="PRO_0000408347" description="Tudor domain-containing protein 5">
    <location>
        <begin position="1"/>
        <end position="985"/>
    </location>
</feature>
<feature type="domain" description="HTH OST-type 1" evidence="4">
    <location>
        <begin position="7"/>
        <end position="80"/>
    </location>
</feature>
<feature type="domain" description="HTH OST-type 2" evidence="4">
    <location>
        <begin position="127"/>
        <end position="202"/>
    </location>
</feature>
<feature type="domain" description="HTH OST-type 3" evidence="4">
    <location>
        <begin position="300"/>
        <end position="374"/>
    </location>
</feature>
<feature type="domain" description="Tudor" evidence="3">
    <location>
        <begin position="530"/>
        <end position="589"/>
    </location>
</feature>
<feature type="region of interest" description="Disordered" evidence="5">
    <location>
        <begin position="98"/>
        <end position="119"/>
    </location>
</feature>
<feature type="region of interest" description="Disordered" evidence="5">
    <location>
        <begin position="818"/>
        <end position="846"/>
    </location>
</feature>
<feature type="region of interest" description="Disordered" evidence="5">
    <location>
        <begin position="889"/>
        <end position="915"/>
    </location>
</feature>
<feature type="compositionally biased region" description="Low complexity" evidence="5">
    <location>
        <begin position="107"/>
        <end position="116"/>
    </location>
</feature>
<feature type="compositionally biased region" description="Polar residues" evidence="5">
    <location>
        <begin position="823"/>
        <end position="845"/>
    </location>
</feature>
<feature type="compositionally biased region" description="Polar residues" evidence="5">
    <location>
        <begin position="904"/>
        <end position="915"/>
    </location>
</feature>
<feature type="modified residue" description="Phosphoserine" evidence="2">
    <location>
        <position position="897"/>
    </location>
</feature>
<comment type="function">
    <text evidence="1">Required during spermiogenesis to participate in the repression transposable elements and prevent their mobilization, which is essential for the germline integrity. Probably acts via the piRNA metabolic process, which mediates the repression of transposable elements during meiosis by forming complexes composed of piRNAs and Piwi proteins and govern the methylation and subsequent repression of transposons. Required for chromatoid body (CB) assembly (By similarity).</text>
</comment>
<comment type="subcellular location">
    <subcellularLocation>
        <location evidence="1">Cytoplasm</location>
    </subcellularLocation>
    <text evidence="1">Localizes to chromatoid body (CB) and pi-body (also called intermitochondrial cementin), 2 cytoplasmic ribonucleoprotein granules involved in RNA processing for spermatogenesis.</text>
</comment>
<comment type="similarity">
    <text evidence="6">Belongs to the TDRD5 family.</text>
</comment>
<keyword id="KW-0963">Cytoplasm</keyword>
<keyword id="KW-0217">Developmental protein</keyword>
<keyword id="KW-0221">Differentiation</keyword>
<keyword id="KW-0597">Phosphoprotein</keyword>
<keyword id="KW-1185">Reference proteome</keyword>
<keyword id="KW-0677">Repeat</keyword>
<keyword id="KW-0744">Spermatogenesis</keyword>
<organism>
    <name type="scientific">Canis lupus familiaris</name>
    <name type="common">Dog</name>
    <name type="synonym">Canis familiaris</name>
    <dbReference type="NCBI Taxonomy" id="9615"/>
    <lineage>
        <taxon>Eukaryota</taxon>
        <taxon>Metazoa</taxon>
        <taxon>Chordata</taxon>
        <taxon>Craniata</taxon>
        <taxon>Vertebrata</taxon>
        <taxon>Euteleostomi</taxon>
        <taxon>Mammalia</taxon>
        <taxon>Eutheria</taxon>
        <taxon>Laurasiatheria</taxon>
        <taxon>Carnivora</taxon>
        <taxon>Caniformia</taxon>
        <taxon>Canidae</taxon>
        <taxon>Canis</taxon>
    </lineage>
</organism>
<name>TDRD5_CANLF</name>
<evidence type="ECO:0000250" key="1"/>
<evidence type="ECO:0000250" key="2">
    <source>
        <dbReference type="UniProtKB" id="Q5VCS6"/>
    </source>
</evidence>
<evidence type="ECO:0000255" key="3">
    <source>
        <dbReference type="PROSITE-ProRule" id="PRU00211"/>
    </source>
</evidence>
<evidence type="ECO:0000255" key="4">
    <source>
        <dbReference type="PROSITE-ProRule" id="PRU00975"/>
    </source>
</evidence>
<evidence type="ECO:0000256" key="5">
    <source>
        <dbReference type="SAM" id="MobiDB-lite"/>
    </source>
</evidence>
<evidence type="ECO:0000305" key="6"/>
<protein>
    <recommendedName>
        <fullName>Tudor domain-containing protein 5</fullName>
    </recommendedName>
</protein>
<sequence>MSEQERVQECLRKEIRSLLISTKDGLTPQQLEKEYLLMVGNHLPLRILGYRSTMELVLDMPDVVTVSPCGDGTIILRAIPDESTKGIANLVAKQRSSHKVRNSMQKGRPSVCSGSSSRRRVPYRGRVPPILPAVVKSELKDLLALSPVLLSDFEKAFARRFGRSFQYVQYGFLSMFEVLNAASDVISVEQTRAGSLLMLKRSISEEKQRGWPAVTKGGKMFTQPFRMKQQGSYSTGSPVAKACFSQPTSNMEPPKQILNAEKTFKSNVVETSRLNHTEKLNQLENTFKSVISQIGPGGTINPELKHKLRFVVSKFPEGLLISKLLREFEIMFKEQLSPKQLGFLNVTELVGALSDILRVEFREGEQDLLVFDANMKPLASVQSDKKIDVKACVSSPPRNSLSTAAVKETAWDCLPKNHREPEQKICKKPNLVVKPLQLQVGVNKSELNLAMANHDIPPDAVRDKKLCRLPPLDTSTLVGVFVEYIISPSQFYIRIYSRDSSELLEDMMIEMRRCYSNQLVSDRYAMPEYFIQPGHLCCVRISEDKWWYRVIIHRVLGKQEVEVFYPDFGNIGTVQKSSLRFLKWCYTKLPAQAIPCSLAWVRPVEEHWTSRAIIQFQKLCGLKPLVGVVDEYVDGILNIFLCDTSSNEDVYFHHVLRTEGHAIVCRENVPSKGFRELNPLALYTKSSAGPEDVVLTELGCPSQQHYFNEDREISPQSKENELPTLDEIPIGMPCLESVTIGDDVWDENWLPLQAKMGKGGDAPSHLFTSSRGGKKPYLSCKEMPQKDWCFSAPKDMWDDSWQPSSLVNGMKVEVQKQEELSAQEKNIGTTRSQKQPNLESSSDSPTLPKLEEFYISLVESQQSAEGSQFEPSSIQTQVKQMQLSTAALSTTPAAVDSPEKHSGSVESSPESLKNDFSSSHAITVFKDKSHGAMDQLSLILSPEHQISQKLYIPRSTATAALGAAARLATSRRLLHWYPSVKRMEA</sequence>
<proteinExistence type="inferred from homology"/>